<organism evidence="3">
    <name type="scientific">Lupinus luteus</name>
    <name type="common">European yellow lupine</name>
    <dbReference type="NCBI Taxonomy" id="3873"/>
    <lineage>
        <taxon>Eukaryota</taxon>
        <taxon>Viridiplantae</taxon>
        <taxon>Streptophyta</taxon>
        <taxon>Embryophyta</taxon>
        <taxon>Tracheophyta</taxon>
        <taxon>Spermatophyta</taxon>
        <taxon>Magnoliopsida</taxon>
        <taxon>eudicotyledons</taxon>
        <taxon>Gunneridae</taxon>
        <taxon>Pentapetalae</taxon>
        <taxon>rosids</taxon>
        <taxon>fabids</taxon>
        <taxon>Fabales</taxon>
        <taxon>Fabaceae</taxon>
        <taxon>Papilionoideae</taxon>
        <taxon>50 kb inversion clade</taxon>
        <taxon>genistoids sensu lato</taxon>
        <taxon>core genistoids</taxon>
        <taxon>Genisteae</taxon>
        <taxon>Lupinus</taxon>
    </lineage>
</organism>
<keyword id="KW-0903">Direct protein sequencing</keyword>
<keyword id="KW-0568">Pathogenesis-related protein</keyword>
<keyword id="KW-0611">Plant defense</keyword>
<comment type="induction">
    <text evidence="1">By heavy metal ions.</text>
</comment>
<comment type="similarity">
    <text evidence="3">Belongs to the BetVI family.</text>
</comment>
<sequence>SIFAFQDESPSAIAQAKLFK</sequence>
<protein>
    <recommendedName>
        <fullName>Protein PR-L5</fullName>
    </recommendedName>
</protein>
<name>PL5_LUPLU</name>
<evidence type="ECO:0000269" key="1">
    <source ref="1"/>
</evidence>
<evidence type="ECO:0000303" key="2">
    <source ref="1"/>
</evidence>
<evidence type="ECO:0000305" key="3"/>
<feature type="chain" id="PRO_0000154198" description="Protein PR-L5">
    <location>
        <begin position="1"/>
        <end position="20" status="greater than"/>
    </location>
</feature>
<feature type="non-terminal residue" evidence="2">
    <location>
        <position position="20"/>
    </location>
</feature>
<proteinExistence type="evidence at protein level"/>
<reference evidence="3" key="1">
    <citation type="journal article" date="1999" name="J. Plant Physiol.">
        <title>Heavy metal-induced polypeptides in lupin roots are similar to pathogenesis-related proteins.</title>
        <authorList>
            <person name="Przymusinski R."/>
            <person name="Gwozdz E.A."/>
        </authorList>
    </citation>
    <scope>PROTEIN SEQUENCE</scope>
    <scope>INDUCTION</scope>
    <source>
        <strain>cv. Ventus</strain>
        <tissue>Root tip</tissue>
    </source>
</reference>
<accession>P83367</accession>
<dbReference type="GO" id="GO:0006952">
    <property type="term" value="P:defense response"/>
    <property type="evidence" value="ECO:0007669"/>
    <property type="project" value="UniProtKB-KW"/>
</dbReference>